<keyword id="KW-0687">Ribonucleoprotein</keyword>
<keyword id="KW-0689">Ribosomal protein</keyword>
<keyword id="KW-0694">RNA-binding</keyword>
<keyword id="KW-0699">rRNA-binding</keyword>
<dbReference type="EMBL" id="CP000644">
    <property type="protein sequence ID" value="ABO91341.1"/>
    <property type="molecule type" value="Genomic_DNA"/>
</dbReference>
<dbReference type="RefSeq" id="WP_005311676.1">
    <property type="nucleotide sequence ID" value="NC_009348.1"/>
</dbReference>
<dbReference type="SMR" id="A4SR19"/>
<dbReference type="STRING" id="29491.GCA_000820065_03754"/>
<dbReference type="KEGG" id="asa:ASA_3363"/>
<dbReference type="eggNOG" id="COG0261">
    <property type="taxonomic scope" value="Bacteria"/>
</dbReference>
<dbReference type="HOGENOM" id="CLU_061463_3_3_6"/>
<dbReference type="Proteomes" id="UP000000225">
    <property type="component" value="Chromosome"/>
</dbReference>
<dbReference type="GO" id="GO:0005737">
    <property type="term" value="C:cytoplasm"/>
    <property type="evidence" value="ECO:0007669"/>
    <property type="project" value="UniProtKB-ARBA"/>
</dbReference>
<dbReference type="GO" id="GO:1990904">
    <property type="term" value="C:ribonucleoprotein complex"/>
    <property type="evidence" value="ECO:0007669"/>
    <property type="project" value="UniProtKB-KW"/>
</dbReference>
<dbReference type="GO" id="GO:0005840">
    <property type="term" value="C:ribosome"/>
    <property type="evidence" value="ECO:0007669"/>
    <property type="project" value="UniProtKB-KW"/>
</dbReference>
<dbReference type="GO" id="GO:0019843">
    <property type="term" value="F:rRNA binding"/>
    <property type="evidence" value="ECO:0007669"/>
    <property type="project" value="UniProtKB-UniRule"/>
</dbReference>
<dbReference type="GO" id="GO:0003735">
    <property type="term" value="F:structural constituent of ribosome"/>
    <property type="evidence" value="ECO:0007669"/>
    <property type="project" value="InterPro"/>
</dbReference>
<dbReference type="GO" id="GO:0006412">
    <property type="term" value="P:translation"/>
    <property type="evidence" value="ECO:0007669"/>
    <property type="project" value="UniProtKB-UniRule"/>
</dbReference>
<dbReference type="HAMAP" id="MF_01363">
    <property type="entry name" value="Ribosomal_bL21"/>
    <property type="match status" value="1"/>
</dbReference>
<dbReference type="InterPro" id="IPR028909">
    <property type="entry name" value="bL21-like"/>
</dbReference>
<dbReference type="InterPro" id="IPR036164">
    <property type="entry name" value="bL21-like_sf"/>
</dbReference>
<dbReference type="InterPro" id="IPR001787">
    <property type="entry name" value="Ribosomal_bL21"/>
</dbReference>
<dbReference type="InterPro" id="IPR018258">
    <property type="entry name" value="Ribosomal_bL21_CS"/>
</dbReference>
<dbReference type="NCBIfam" id="TIGR00061">
    <property type="entry name" value="L21"/>
    <property type="match status" value="1"/>
</dbReference>
<dbReference type="PANTHER" id="PTHR21349">
    <property type="entry name" value="50S RIBOSOMAL PROTEIN L21"/>
    <property type="match status" value="1"/>
</dbReference>
<dbReference type="PANTHER" id="PTHR21349:SF0">
    <property type="entry name" value="LARGE RIBOSOMAL SUBUNIT PROTEIN BL21M"/>
    <property type="match status" value="1"/>
</dbReference>
<dbReference type="Pfam" id="PF00829">
    <property type="entry name" value="Ribosomal_L21p"/>
    <property type="match status" value="1"/>
</dbReference>
<dbReference type="SUPFAM" id="SSF141091">
    <property type="entry name" value="L21p-like"/>
    <property type="match status" value="1"/>
</dbReference>
<dbReference type="PROSITE" id="PS01169">
    <property type="entry name" value="RIBOSOMAL_L21"/>
    <property type="match status" value="1"/>
</dbReference>
<protein>
    <recommendedName>
        <fullName evidence="1">Large ribosomal subunit protein bL21</fullName>
    </recommendedName>
    <alternativeName>
        <fullName evidence="2">50S ribosomal protein L21</fullName>
    </alternativeName>
</protein>
<gene>
    <name evidence="1" type="primary">rplU</name>
    <name type="ordered locus">ASA_3363</name>
</gene>
<proteinExistence type="inferred from homology"/>
<feature type="chain" id="PRO_1000067796" description="Large ribosomal subunit protein bL21">
    <location>
        <begin position="1"/>
        <end position="103"/>
    </location>
</feature>
<name>RL21_AERS4</name>
<organism>
    <name type="scientific">Aeromonas salmonicida (strain A449)</name>
    <dbReference type="NCBI Taxonomy" id="382245"/>
    <lineage>
        <taxon>Bacteria</taxon>
        <taxon>Pseudomonadati</taxon>
        <taxon>Pseudomonadota</taxon>
        <taxon>Gammaproteobacteria</taxon>
        <taxon>Aeromonadales</taxon>
        <taxon>Aeromonadaceae</taxon>
        <taxon>Aeromonas</taxon>
    </lineage>
</organism>
<reference key="1">
    <citation type="journal article" date="2008" name="BMC Genomics">
        <title>The genome of Aeromonas salmonicida subsp. salmonicida A449: insights into the evolution of a fish pathogen.</title>
        <authorList>
            <person name="Reith M.E."/>
            <person name="Singh R.K."/>
            <person name="Curtis B."/>
            <person name="Boyd J.M."/>
            <person name="Bouevitch A."/>
            <person name="Kimball J."/>
            <person name="Munholland J."/>
            <person name="Murphy C."/>
            <person name="Sarty D."/>
            <person name="Williams J."/>
            <person name="Nash J.H."/>
            <person name="Johnson S.C."/>
            <person name="Brown L.L."/>
        </authorList>
    </citation>
    <scope>NUCLEOTIDE SEQUENCE [LARGE SCALE GENOMIC DNA]</scope>
    <source>
        <strain>A449</strain>
    </source>
</reference>
<accession>A4SR19</accession>
<evidence type="ECO:0000255" key="1">
    <source>
        <dbReference type="HAMAP-Rule" id="MF_01363"/>
    </source>
</evidence>
<evidence type="ECO:0000305" key="2"/>
<sequence length="103" mass="11427">MYAVFQSGGKQHRVAEGQIVRLEKLNVETGATIDFNEVLMVAVGDTFKVGAPFVEGGKVVAEVVAHGRGEKVTIVKFRRRKHHRKQAGHRQWFTEVKITGISA</sequence>
<comment type="function">
    <text evidence="1">This protein binds to 23S rRNA in the presence of protein L20.</text>
</comment>
<comment type="subunit">
    <text evidence="1">Part of the 50S ribosomal subunit. Contacts protein L20.</text>
</comment>
<comment type="similarity">
    <text evidence="1">Belongs to the bacterial ribosomal protein bL21 family.</text>
</comment>